<reference key="1">
    <citation type="journal article" date="2002" name="DNA Res.">
        <title>Complete genome structure of the thermophilic cyanobacterium Thermosynechococcus elongatus BP-1.</title>
        <authorList>
            <person name="Nakamura Y."/>
            <person name="Kaneko T."/>
            <person name="Sato S."/>
            <person name="Ikeuchi M."/>
            <person name="Katoh H."/>
            <person name="Sasamoto S."/>
            <person name="Watanabe A."/>
            <person name="Iriguchi M."/>
            <person name="Kawashima K."/>
            <person name="Kimura T."/>
            <person name="Kishida Y."/>
            <person name="Kiyokawa C."/>
            <person name="Kohara M."/>
            <person name="Matsumoto M."/>
            <person name="Matsuno A."/>
            <person name="Nakazaki N."/>
            <person name="Shimpo S."/>
            <person name="Sugimoto M."/>
            <person name="Takeuchi C."/>
            <person name="Yamada M."/>
            <person name="Tabata S."/>
        </authorList>
    </citation>
    <scope>NUCLEOTIDE SEQUENCE [LARGE SCALE GENOMIC DNA]</scope>
    <source>
        <strain>NIES-2133 / IAM M-273 / BP-1</strain>
    </source>
</reference>
<feature type="chain" id="PRO_0000176359" description="Elongation factor 4">
    <location>
        <begin position="1"/>
        <end position="603"/>
    </location>
</feature>
<feature type="domain" description="tr-type G">
    <location>
        <begin position="7"/>
        <end position="189"/>
    </location>
</feature>
<feature type="binding site" evidence="1">
    <location>
        <begin position="19"/>
        <end position="24"/>
    </location>
    <ligand>
        <name>GTP</name>
        <dbReference type="ChEBI" id="CHEBI:37565"/>
    </ligand>
</feature>
<feature type="binding site" evidence="1">
    <location>
        <begin position="136"/>
        <end position="139"/>
    </location>
    <ligand>
        <name>GTP</name>
        <dbReference type="ChEBI" id="CHEBI:37565"/>
    </ligand>
</feature>
<organism>
    <name type="scientific">Thermosynechococcus vestitus (strain NIES-2133 / IAM M-273 / BP-1)</name>
    <dbReference type="NCBI Taxonomy" id="197221"/>
    <lineage>
        <taxon>Bacteria</taxon>
        <taxon>Bacillati</taxon>
        <taxon>Cyanobacteriota</taxon>
        <taxon>Cyanophyceae</taxon>
        <taxon>Acaryochloridales</taxon>
        <taxon>Thermosynechococcaceae</taxon>
        <taxon>Thermosynechococcus</taxon>
    </lineage>
</organism>
<evidence type="ECO:0000255" key="1">
    <source>
        <dbReference type="HAMAP-Rule" id="MF_00071"/>
    </source>
</evidence>
<proteinExistence type="inferred from homology"/>
<accession>Q8DM20</accession>
<keyword id="KW-0997">Cell inner membrane</keyword>
<keyword id="KW-1003">Cell membrane</keyword>
<keyword id="KW-0342">GTP-binding</keyword>
<keyword id="KW-0378">Hydrolase</keyword>
<keyword id="KW-0472">Membrane</keyword>
<keyword id="KW-0547">Nucleotide-binding</keyword>
<keyword id="KW-0648">Protein biosynthesis</keyword>
<keyword id="KW-1185">Reference proteome</keyword>
<gene>
    <name evidence="1" type="primary">lepA</name>
    <name type="ordered locus">tlr0304</name>
</gene>
<dbReference type="EC" id="3.6.5.n1" evidence="1"/>
<dbReference type="EMBL" id="BA000039">
    <property type="protein sequence ID" value="BAC07857.1"/>
    <property type="molecule type" value="Genomic_DNA"/>
</dbReference>
<dbReference type="RefSeq" id="NP_681095.1">
    <property type="nucleotide sequence ID" value="NC_004113.1"/>
</dbReference>
<dbReference type="RefSeq" id="WP_011056160.1">
    <property type="nucleotide sequence ID" value="NC_004113.1"/>
</dbReference>
<dbReference type="SMR" id="Q8DM20"/>
<dbReference type="STRING" id="197221.gene:10746888"/>
<dbReference type="EnsemblBacteria" id="BAC07857">
    <property type="protein sequence ID" value="BAC07857"/>
    <property type="gene ID" value="BAC07857"/>
</dbReference>
<dbReference type="KEGG" id="tel:tlr0304"/>
<dbReference type="PATRIC" id="fig|197221.4.peg.319"/>
<dbReference type="eggNOG" id="COG0481">
    <property type="taxonomic scope" value="Bacteria"/>
</dbReference>
<dbReference type="Proteomes" id="UP000000440">
    <property type="component" value="Chromosome"/>
</dbReference>
<dbReference type="GO" id="GO:0005886">
    <property type="term" value="C:plasma membrane"/>
    <property type="evidence" value="ECO:0007669"/>
    <property type="project" value="UniProtKB-SubCell"/>
</dbReference>
<dbReference type="GO" id="GO:0005525">
    <property type="term" value="F:GTP binding"/>
    <property type="evidence" value="ECO:0007669"/>
    <property type="project" value="UniProtKB-KW"/>
</dbReference>
<dbReference type="GO" id="GO:0003924">
    <property type="term" value="F:GTPase activity"/>
    <property type="evidence" value="ECO:0007669"/>
    <property type="project" value="InterPro"/>
</dbReference>
<dbReference type="GO" id="GO:0043022">
    <property type="term" value="F:ribosome binding"/>
    <property type="evidence" value="ECO:0007669"/>
    <property type="project" value="TreeGrafter"/>
</dbReference>
<dbReference type="GO" id="GO:0045727">
    <property type="term" value="P:positive regulation of translation"/>
    <property type="evidence" value="ECO:0007669"/>
    <property type="project" value="TreeGrafter"/>
</dbReference>
<dbReference type="GO" id="GO:0006412">
    <property type="term" value="P:translation"/>
    <property type="evidence" value="ECO:0007669"/>
    <property type="project" value="UniProtKB-KW"/>
</dbReference>
<dbReference type="CDD" id="cd03699">
    <property type="entry name" value="EF4_II"/>
    <property type="match status" value="1"/>
</dbReference>
<dbReference type="CDD" id="cd16260">
    <property type="entry name" value="EF4_III"/>
    <property type="match status" value="1"/>
</dbReference>
<dbReference type="CDD" id="cd01890">
    <property type="entry name" value="LepA"/>
    <property type="match status" value="1"/>
</dbReference>
<dbReference type="CDD" id="cd03709">
    <property type="entry name" value="lepA_C"/>
    <property type="match status" value="1"/>
</dbReference>
<dbReference type="FunFam" id="3.40.50.300:FF:000078">
    <property type="entry name" value="Elongation factor 4"/>
    <property type="match status" value="1"/>
</dbReference>
<dbReference type="FunFam" id="2.40.30.10:FF:000015">
    <property type="entry name" value="Translation factor GUF1, mitochondrial"/>
    <property type="match status" value="1"/>
</dbReference>
<dbReference type="FunFam" id="3.30.70.240:FF:000007">
    <property type="entry name" value="Translation factor GUF1, mitochondrial"/>
    <property type="match status" value="1"/>
</dbReference>
<dbReference type="FunFam" id="3.30.70.2570:FF:000001">
    <property type="entry name" value="Translation factor GUF1, mitochondrial"/>
    <property type="match status" value="1"/>
</dbReference>
<dbReference type="FunFam" id="3.30.70.870:FF:000004">
    <property type="entry name" value="Translation factor GUF1, mitochondrial"/>
    <property type="match status" value="1"/>
</dbReference>
<dbReference type="Gene3D" id="3.30.70.240">
    <property type="match status" value="1"/>
</dbReference>
<dbReference type="Gene3D" id="3.30.70.2570">
    <property type="entry name" value="Elongation factor 4, C-terminal domain"/>
    <property type="match status" value="1"/>
</dbReference>
<dbReference type="Gene3D" id="3.30.70.870">
    <property type="entry name" value="Elongation Factor G (Translational Gtpase), domain 3"/>
    <property type="match status" value="1"/>
</dbReference>
<dbReference type="Gene3D" id="3.40.50.300">
    <property type="entry name" value="P-loop containing nucleotide triphosphate hydrolases"/>
    <property type="match status" value="1"/>
</dbReference>
<dbReference type="Gene3D" id="2.40.30.10">
    <property type="entry name" value="Translation factors"/>
    <property type="match status" value="1"/>
</dbReference>
<dbReference type="HAMAP" id="MF_03138">
    <property type="entry name" value="GUFP"/>
    <property type="match status" value="1"/>
</dbReference>
<dbReference type="HAMAP" id="MF_00071">
    <property type="entry name" value="LepA"/>
    <property type="match status" value="1"/>
</dbReference>
<dbReference type="InterPro" id="IPR006297">
    <property type="entry name" value="EF-4"/>
</dbReference>
<dbReference type="InterPro" id="IPR035647">
    <property type="entry name" value="EFG_III/V"/>
</dbReference>
<dbReference type="InterPro" id="IPR000640">
    <property type="entry name" value="EFG_V-like"/>
</dbReference>
<dbReference type="InterPro" id="IPR004161">
    <property type="entry name" value="EFTu-like_2"/>
</dbReference>
<dbReference type="InterPro" id="IPR031157">
    <property type="entry name" value="G_TR_CS"/>
</dbReference>
<dbReference type="InterPro" id="IPR027518">
    <property type="entry name" value="GUFP"/>
</dbReference>
<dbReference type="InterPro" id="IPR038363">
    <property type="entry name" value="LepA_C_sf"/>
</dbReference>
<dbReference type="InterPro" id="IPR013842">
    <property type="entry name" value="LepA_CTD"/>
</dbReference>
<dbReference type="InterPro" id="IPR035654">
    <property type="entry name" value="LepA_IV"/>
</dbReference>
<dbReference type="InterPro" id="IPR027417">
    <property type="entry name" value="P-loop_NTPase"/>
</dbReference>
<dbReference type="InterPro" id="IPR005225">
    <property type="entry name" value="Small_GTP-bd"/>
</dbReference>
<dbReference type="InterPro" id="IPR000795">
    <property type="entry name" value="T_Tr_GTP-bd_dom"/>
</dbReference>
<dbReference type="NCBIfam" id="TIGR01393">
    <property type="entry name" value="lepA"/>
    <property type="match status" value="1"/>
</dbReference>
<dbReference type="NCBIfam" id="TIGR00231">
    <property type="entry name" value="small_GTP"/>
    <property type="match status" value="1"/>
</dbReference>
<dbReference type="PANTHER" id="PTHR43512:SF4">
    <property type="entry name" value="TRANSLATION FACTOR GUF1 HOMOLOG, CHLOROPLASTIC"/>
    <property type="match status" value="1"/>
</dbReference>
<dbReference type="PANTHER" id="PTHR43512">
    <property type="entry name" value="TRANSLATION FACTOR GUF1-RELATED"/>
    <property type="match status" value="1"/>
</dbReference>
<dbReference type="Pfam" id="PF00679">
    <property type="entry name" value="EFG_C"/>
    <property type="match status" value="1"/>
</dbReference>
<dbReference type="Pfam" id="PF00009">
    <property type="entry name" value="GTP_EFTU"/>
    <property type="match status" value="1"/>
</dbReference>
<dbReference type="Pfam" id="PF03144">
    <property type="entry name" value="GTP_EFTU_D2"/>
    <property type="match status" value="1"/>
</dbReference>
<dbReference type="Pfam" id="PF06421">
    <property type="entry name" value="LepA_C"/>
    <property type="match status" value="1"/>
</dbReference>
<dbReference type="PRINTS" id="PR00315">
    <property type="entry name" value="ELONGATNFCT"/>
</dbReference>
<dbReference type="SUPFAM" id="SSF54980">
    <property type="entry name" value="EF-G C-terminal domain-like"/>
    <property type="match status" value="2"/>
</dbReference>
<dbReference type="SUPFAM" id="SSF52540">
    <property type="entry name" value="P-loop containing nucleoside triphosphate hydrolases"/>
    <property type="match status" value="1"/>
</dbReference>
<dbReference type="PROSITE" id="PS00301">
    <property type="entry name" value="G_TR_1"/>
    <property type="match status" value="1"/>
</dbReference>
<dbReference type="PROSITE" id="PS51722">
    <property type="entry name" value="G_TR_2"/>
    <property type="match status" value="1"/>
</dbReference>
<sequence length="603" mass="67579">MTDVPVSHIRNFSIIAHIDHGKSTLADRLLQLTGTVDPREMKEQFLDNMELERERGITIKLQAARMTYTSRDGETYILNLIDTPGHVDFSYEVSRSLAACEGALLVVDASQGVEAQTLANVYLALEHNLEIIPVLNKIDLPGAEPDRVKAEIEEIIGLDCSQAVLASAKEGIGIEEILESIVHLVPPPRDTVDQPLRALIFDSYYDAYRGVIVYFRVMDGIVRRGDRIRLMASGKEYEIDELGVLAPNQKPVESLHAGEVGYLAAAIKAVGDARVGDTITLAHNPAKEPLPGYTEAKPMVFCGLFPTDADQFEDLREALEKLKLNDASLHYEPETSSAMGFGFRCGFLGLLHMEIIQERLEREYNLDLIITAPSVVYRVTTVKGEVLMIDNPSLLPEPQYREKIEEPYVQLEMITPETYVGTLMELAQSRRGIFKDMRYLTQGRTTLVYEMPLAEIVTDFFDEMKSRSRGYASMEYHLIGYRANDLVKLDILINNDPVDSLAAIVHRDKAYHVGRALVSKLKDLIPRHQFKIPIQAAIGSRVIASESIPALRKDVLAKCYGGDVTRKRKLLEKQKAGKKRMKAIGRVDVPQEAFMAVLRLKNE</sequence>
<name>LEPA_THEVB</name>
<comment type="function">
    <text evidence="1">Required for accurate and efficient protein synthesis under certain stress conditions. May act as a fidelity factor of the translation reaction, by catalyzing a one-codon backward translocation of tRNAs on improperly translocated ribosomes. Back-translocation proceeds from a post-translocation (POST) complex to a pre-translocation (PRE) complex, thus giving elongation factor G a second chance to translocate the tRNAs correctly. Binds to ribosomes in a GTP-dependent manner.</text>
</comment>
<comment type="catalytic activity">
    <reaction evidence="1">
        <text>GTP + H2O = GDP + phosphate + H(+)</text>
        <dbReference type="Rhea" id="RHEA:19669"/>
        <dbReference type="ChEBI" id="CHEBI:15377"/>
        <dbReference type="ChEBI" id="CHEBI:15378"/>
        <dbReference type="ChEBI" id="CHEBI:37565"/>
        <dbReference type="ChEBI" id="CHEBI:43474"/>
        <dbReference type="ChEBI" id="CHEBI:58189"/>
        <dbReference type="EC" id="3.6.5.n1"/>
    </reaction>
</comment>
<comment type="subcellular location">
    <subcellularLocation>
        <location evidence="1">Cell inner membrane</location>
        <topology evidence="1">Peripheral membrane protein</topology>
        <orientation evidence="1">Cytoplasmic side</orientation>
    </subcellularLocation>
</comment>
<comment type="similarity">
    <text evidence="1">Belongs to the TRAFAC class translation factor GTPase superfamily. Classic translation factor GTPase family. LepA subfamily.</text>
</comment>
<protein>
    <recommendedName>
        <fullName evidence="1">Elongation factor 4</fullName>
        <shortName evidence="1">EF-4</shortName>
        <ecNumber evidence="1">3.6.5.n1</ecNumber>
    </recommendedName>
    <alternativeName>
        <fullName evidence="1">Ribosomal back-translocase LepA</fullName>
    </alternativeName>
</protein>